<gene>
    <name evidence="1" type="primary">rpmF</name>
    <name type="ordered locus">AM870.5</name>
</gene>
<feature type="chain" id="PRO_0000225699" description="Large ribosomal subunit protein bL32">
    <location>
        <begin position="1"/>
        <end position="58"/>
    </location>
</feature>
<dbReference type="EMBL" id="CP000030">
    <property type="protein sequence ID" value="AAV86784.1"/>
    <property type="molecule type" value="Genomic_DNA"/>
</dbReference>
<dbReference type="SMR" id="Q5PA96"/>
<dbReference type="KEGG" id="ama:AM870.5"/>
<dbReference type="HOGENOM" id="CLU_129084_2_0_5"/>
<dbReference type="GO" id="GO:0015934">
    <property type="term" value="C:large ribosomal subunit"/>
    <property type="evidence" value="ECO:0007669"/>
    <property type="project" value="InterPro"/>
</dbReference>
<dbReference type="GO" id="GO:0003735">
    <property type="term" value="F:structural constituent of ribosome"/>
    <property type="evidence" value="ECO:0007669"/>
    <property type="project" value="InterPro"/>
</dbReference>
<dbReference type="GO" id="GO:0006412">
    <property type="term" value="P:translation"/>
    <property type="evidence" value="ECO:0007669"/>
    <property type="project" value="UniProtKB-UniRule"/>
</dbReference>
<dbReference type="Gene3D" id="1.20.5.640">
    <property type="entry name" value="Single helix bin"/>
    <property type="match status" value="1"/>
</dbReference>
<dbReference type="HAMAP" id="MF_00340">
    <property type="entry name" value="Ribosomal_bL32"/>
    <property type="match status" value="1"/>
</dbReference>
<dbReference type="InterPro" id="IPR002677">
    <property type="entry name" value="Ribosomal_bL32"/>
</dbReference>
<dbReference type="InterPro" id="IPR044957">
    <property type="entry name" value="Ribosomal_bL32_bact"/>
</dbReference>
<dbReference type="InterPro" id="IPR011332">
    <property type="entry name" value="Ribosomal_zn-bd"/>
</dbReference>
<dbReference type="NCBIfam" id="TIGR01031">
    <property type="entry name" value="rpmF_bact"/>
    <property type="match status" value="1"/>
</dbReference>
<dbReference type="PANTHER" id="PTHR35534">
    <property type="entry name" value="50S RIBOSOMAL PROTEIN L32"/>
    <property type="match status" value="1"/>
</dbReference>
<dbReference type="PANTHER" id="PTHR35534:SF1">
    <property type="entry name" value="LARGE RIBOSOMAL SUBUNIT PROTEIN BL32"/>
    <property type="match status" value="1"/>
</dbReference>
<dbReference type="Pfam" id="PF01783">
    <property type="entry name" value="Ribosomal_L32p"/>
    <property type="match status" value="1"/>
</dbReference>
<dbReference type="SUPFAM" id="SSF57829">
    <property type="entry name" value="Zn-binding ribosomal proteins"/>
    <property type="match status" value="1"/>
</dbReference>
<sequence length="58" mass="6491">MAVPKRKKSKSRRNMHRSHLALSAANVVIDPTTGEYKLPHHVCLGGYYNGKQVTESKV</sequence>
<name>RL32_ANAMM</name>
<protein>
    <recommendedName>
        <fullName evidence="1">Large ribosomal subunit protein bL32</fullName>
    </recommendedName>
    <alternativeName>
        <fullName evidence="2">50S ribosomal protein L32</fullName>
    </alternativeName>
</protein>
<evidence type="ECO:0000255" key="1">
    <source>
        <dbReference type="HAMAP-Rule" id="MF_00340"/>
    </source>
</evidence>
<evidence type="ECO:0000305" key="2"/>
<accession>Q5PA96</accession>
<keyword id="KW-0687">Ribonucleoprotein</keyword>
<keyword id="KW-0689">Ribosomal protein</keyword>
<reference key="1">
    <citation type="journal article" date="2005" name="Proc. Natl. Acad. Sci. U.S.A.">
        <title>Complete genome sequencing of Anaplasma marginale reveals that the surface is skewed to two superfamilies of outer membrane proteins.</title>
        <authorList>
            <person name="Brayton K.A."/>
            <person name="Kappmeyer L.S."/>
            <person name="Herndon D.R."/>
            <person name="Dark M.J."/>
            <person name="Tibbals D.L."/>
            <person name="Palmer G.H."/>
            <person name="McGuire T.C."/>
            <person name="Knowles D.P. Jr."/>
        </authorList>
    </citation>
    <scope>NUCLEOTIDE SEQUENCE [LARGE SCALE GENOMIC DNA]</scope>
    <source>
        <strain>St. Maries</strain>
    </source>
</reference>
<proteinExistence type="inferred from homology"/>
<comment type="similarity">
    <text evidence="1">Belongs to the bacterial ribosomal protein bL32 family.</text>
</comment>
<organism>
    <name type="scientific">Anaplasma marginale (strain St. Maries)</name>
    <dbReference type="NCBI Taxonomy" id="234826"/>
    <lineage>
        <taxon>Bacteria</taxon>
        <taxon>Pseudomonadati</taxon>
        <taxon>Pseudomonadota</taxon>
        <taxon>Alphaproteobacteria</taxon>
        <taxon>Rickettsiales</taxon>
        <taxon>Anaplasmataceae</taxon>
        <taxon>Anaplasma</taxon>
    </lineage>
</organism>